<keyword id="KW-0002">3D-structure</keyword>
<keyword id="KW-1003">Cell membrane</keyword>
<keyword id="KW-0903">Direct protein sequencing</keyword>
<keyword id="KW-0472">Membrane</keyword>
<keyword id="KW-0479">Metal-binding</keyword>
<keyword id="KW-0533">Nickel</keyword>
<keyword id="KW-0560">Oxidoreductase</keyword>
<keyword id="KW-1185">Reference proteome</keyword>
<proteinExistence type="evidence at protein level"/>
<accession>Q8U0Z6</accession>
<reference evidence="10" key="1">
    <citation type="journal article" date="1999" name="Genetics">
        <title>Divergence of the hyperthermophilic archaea Pyrococcus furiosus and P. horikoshii inferred from complete genomic sequences.</title>
        <authorList>
            <person name="Maeder D.L."/>
            <person name="Weiss R.B."/>
            <person name="Dunn D.M."/>
            <person name="Cherry J.L."/>
            <person name="Gonzalez J.M."/>
            <person name="DiRuggiero J."/>
            <person name="Robb F.T."/>
        </authorList>
    </citation>
    <scope>NUCLEOTIDE SEQUENCE [LARGE SCALE GENOMIC DNA]</scope>
    <source>
        <strain>ATCC 43587 / DSM 3638 / JCM 8422 / Vc1</strain>
    </source>
</reference>
<reference evidence="7" key="2">
    <citation type="journal article" date="2000" name="Eur. J. Biochem.">
        <title>Enzymes of hydrogen metabolism in Pyrococcus furiosus.</title>
        <authorList>
            <person name="Silva P.J."/>
            <person name="van den Ban E.C."/>
            <person name="Wassink H."/>
            <person name="Haaker H."/>
            <person name="de Castro B."/>
            <person name="Robb F.T."/>
            <person name="Hagen W.R."/>
        </authorList>
    </citation>
    <scope>PROTEIN SEQUENCE OF 1-30</scope>
    <scope>FUNCTION</scope>
    <scope>CATALYTIC ACTIVITY</scope>
    <scope>BIOPHYSICOCHEMICAL PROPERTIES</scope>
    <scope>SUBCELLULAR LOCATION</scope>
    <scope>EPR SPECTROSCOPY</scope>
    <source>
        <strain evidence="3">ATCC 43587 / DSM 3638 / JCM 8422 / Vc1</strain>
    </source>
</reference>
<reference evidence="7" key="3">
    <citation type="journal article" date="2000" name="J. Bacteriol.">
        <title>Purification and characterization of a membrane-bound hydrogenase from the hyperthermophilic archaeon Pyrococcus furiosus.</title>
        <authorList>
            <person name="Sapra R."/>
            <person name="Verhagen M.F."/>
            <person name="Adams M.W."/>
        </authorList>
    </citation>
    <scope>PROTEIN SEQUENCE OF 1-10</scope>
    <scope>FUNCTION</scope>
    <scope>CATALYTIC ACTIVITY</scope>
    <scope>COFACTOR</scope>
    <scope>BIOPHYSICOCHEMICAL PROPERTIES</scope>
    <scope>SUBUNIT</scope>
    <scope>SUBCELLULAR LOCATION</scope>
    <scope>EPR SPECTROSCOPY</scope>
    <source>
        <strain evidence="2">ATCC 43587 / DSM 3638 / JCM 8422 / Vc1</strain>
    </source>
</reference>
<reference evidence="7" key="4">
    <citation type="journal article" date="2003" name="Proc. Natl. Acad. Sci. U.S.A.">
        <title>A simple energy-conserving system: proton reduction coupled to proton translocation.</title>
        <authorList>
            <person name="Sapra R."/>
            <person name="Bagramyan K."/>
            <person name="Adams M.W."/>
        </authorList>
    </citation>
    <scope>FUNCTION</scope>
    <scope>CATALYTIC ACTIVITY</scope>
    <scope>ACTIVITY REGULATION</scope>
    <source>
        <strain evidence="4">ATCC 43587 / DSM 3638 / JCM 8422 / Vc1</strain>
    </source>
</reference>
<protein>
    <recommendedName>
        <fullName evidence="5">Membrane-bound hydrogenase subunit alpha</fullName>
        <shortName evidence="5">MBH-alpha</shortName>
        <ecNumber evidence="2">1.12.7.2</ecNumber>
    </recommendedName>
</protein>
<gene>
    <name evidence="6" type="primary">mbhL</name>
    <name evidence="5" type="synonym">mbh12</name>
    <name type="ordered locus">PF1434</name>
</gene>
<dbReference type="EC" id="1.12.7.2" evidence="2"/>
<dbReference type="EMBL" id="AE009950">
    <property type="protein sequence ID" value="AAL81558.1"/>
    <property type="molecule type" value="Genomic_DNA"/>
</dbReference>
<dbReference type="RefSeq" id="WP_011012581.1">
    <property type="nucleotide sequence ID" value="NZ_CP023154.1"/>
</dbReference>
<dbReference type="PDB" id="6CFW">
    <property type="method" value="EM"/>
    <property type="resolution" value="3.70 A"/>
    <property type="chains" value="L=1-380"/>
</dbReference>
<dbReference type="PDBsum" id="6CFW"/>
<dbReference type="EMDB" id="EMD-7468"/>
<dbReference type="SMR" id="Q8U0Z6"/>
<dbReference type="STRING" id="186497.PF1434"/>
<dbReference type="TCDB" id="3.D.1.4.1">
    <property type="family name" value="the h+ or na+-translocating nadh dehydrogenase (ndh) family"/>
</dbReference>
<dbReference type="PaxDb" id="186497-PF1434"/>
<dbReference type="KEGG" id="pfu:PF1434"/>
<dbReference type="PATRIC" id="fig|186497.12.peg.1496"/>
<dbReference type="eggNOG" id="arCOG01547">
    <property type="taxonomic scope" value="Archaea"/>
</dbReference>
<dbReference type="HOGENOM" id="CLU_015134_1_2_2"/>
<dbReference type="OrthoDB" id="43567at2157"/>
<dbReference type="PhylomeDB" id="Q8U0Z6"/>
<dbReference type="BRENDA" id="1.12.7.2">
    <property type="organism ID" value="5243"/>
</dbReference>
<dbReference type="Proteomes" id="UP000001013">
    <property type="component" value="Chromosome"/>
</dbReference>
<dbReference type="GO" id="GO:0009375">
    <property type="term" value="C:ferredoxin hydrogenase complex"/>
    <property type="evidence" value="ECO:0000314"/>
    <property type="project" value="UniProtKB"/>
</dbReference>
<dbReference type="GO" id="GO:0005886">
    <property type="term" value="C:plasma membrane"/>
    <property type="evidence" value="ECO:0007669"/>
    <property type="project" value="UniProtKB-SubCell"/>
</dbReference>
<dbReference type="GO" id="GO:0008901">
    <property type="term" value="F:ferredoxin hydrogenase activity"/>
    <property type="evidence" value="ECO:0000314"/>
    <property type="project" value="UniProtKB"/>
</dbReference>
<dbReference type="GO" id="GO:0051287">
    <property type="term" value="F:NAD binding"/>
    <property type="evidence" value="ECO:0007669"/>
    <property type="project" value="InterPro"/>
</dbReference>
<dbReference type="GO" id="GO:0016151">
    <property type="term" value="F:nickel cation binding"/>
    <property type="evidence" value="ECO:0007669"/>
    <property type="project" value="InterPro"/>
</dbReference>
<dbReference type="GO" id="GO:0016651">
    <property type="term" value="F:oxidoreductase activity, acting on NAD(P)H"/>
    <property type="evidence" value="ECO:0007669"/>
    <property type="project" value="InterPro"/>
</dbReference>
<dbReference type="GO" id="GO:0048038">
    <property type="term" value="F:quinone binding"/>
    <property type="evidence" value="ECO:0007669"/>
    <property type="project" value="InterPro"/>
</dbReference>
<dbReference type="GO" id="GO:0015986">
    <property type="term" value="P:proton motive force-driven ATP synthesis"/>
    <property type="evidence" value="ECO:0000314"/>
    <property type="project" value="UniProtKB"/>
</dbReference>
<dbReference type="Gene3D" id="1.10.645.10">
    <property type="entry name" value="Cytochrome-c3 Hydrogenase, chain B"/>
    <property type="match status" value="1"/>
</dbReference>
<dbReference type="InterPro" id="IPR052197">
    <property type="entry name" value="ComplexI_49kDa-like"/>
</dbReference>
<dbReference type="InterPro" id="IPR001135">
    <property type="entry name" value="NADH_Q_OxRdtase_suD"/>
</dbReference>
<dbReference type="InterPro" id="IPR001501">
    <property type="entry name" value="Ni-dep_hyd_lsu"/>
</dbReference>
<dbReference type="InterPro" id="IPR029014">
    <property type="entry name" value="NiFe-Hase_large"/>
</dbReference>
<dbReference type="PANTHER" id="PTHR43485:SF1">
    <property type="entry name" value="FORMATE HYDROGENLYASE SUBUNIT 5-RELATED"/>
    <property type="match status" value="1"/>
</dbReference>
<dbReference type="PANTHER" id="PTHR43485">
    <property type="entry name" value="HYDROGENASE-4 COMPONENT G"/>
    <property type="match status" value="1"/>
</dbReference>
<dbReference type="Pfam" id="PF00346">
    <property type="entry name" value="Complex1_49kDa"/>
    <property type="match status" value="1"/>
</dbReference>
<dbReference type="Pfam" id="PF00374">
    <property type="entry name" value="NiFeSe_Hases"/>
    <property type="match status" value="1"/>
</dbReference>
<dbReference type="SUPFAM" id="SSF56762">
    <property type="entry name" value="HydB/Nqo4-like"/>
    <property type="match status" value="1"/>
</dbReference>
<name>MBHLA_PYRFU</name>
<organism>
    <name type="scientific">Pyrococcus furiosus (strain ATCC 43587 / DSM 3638 / JCM 8422 / Vc1)</name>
    <dbReference type="NCBI Taxonomy" id="186497"/>
    <lineage>
        <taxon>Archaea</taxon>
        <taxon>Methanobacteriati</taxon>
        <taxon>Methanobacteriota</taxon>
        <taxon>Thermococci</taxon>
        <taxon>Thermococcales</taxon>
        <taxon>Thermococcaceae</taxon>
        <taxon>Pyrococcus</taxon>
    </lineage>
</organism>
<feature type="chain" id="PRO_0000420791" description="Membrane-bound hydrogenase subunit alpha">
    <location>
        <begin position="1"/>
        <end position="427"/>
    </location>
</feature>
<feature type="binding site" evidence="1">
    <location>
        <position position="68"/>
    </location>
    <ligand>
        <name>Ni(2+)</name>
        <dbReference type="ChEBI" id="CHEBI:49786"/>
    </ligand>
</feature>
<feature type="binding site" evidence="1">
    <location>
        <position position="71"/>
    </location>
    <ligand>
        <name>Ni(2+)</name>
        <dbReference type="ChEBI" id="CHEBI:49786"/>
    </ligand>
</feature>
<feature type="binding site" evidence="1">
    <location>
        <position position="374"/>
    </location>
    <ligand>
        <name>Ni(2+)</name>
        <dbReference type="ChEBI" id="CHEBI:49786"/>
    </ligand>
</feature>
<feature type="binding site" evidence="1">
    <location>
        <position position="377"/>
    </location>
    <ligand>
        <name>Ni(2+)</name>
        <dbReference type="ChEBI" id="CHEBI:49786"/>
    </ligand>
</feature>
<sequence>MKKVEYWVKIPFGPIHPGLEEPEKFIITLDGERIVNVDVKLGYNLRGVQWIGMRRNYVQIMYLAERMCGICSFSHNHTYVRAVEEMAGIEVPERAEYIRVIVGELERIHSHLLNLGVVGHDIGYDTVLHLTWLARERVMDVLEAVSGNRVNYSMVTIGGVRRDIGEKQKRLILDMIKYYREVLPQIEDVFLHDSTIEARLRDVAVVPKKLAIEMGAVGPTARGSGIKEDSRWSEQLGVYPDLGIKPVTPEDVTGEKARGDVYDRMAVRIGELWMSLDLLEHALDQMPEGKIKTFPKDNILVAKLKLLGDGEGIGRYEAPRGELVHYVRGQKGRDGPVRWKPREPTFPNLFTIAKALEGNELADLVVAIASIDPCLSCTDRVAIVKEGKKVVLTEKDLLKLSIEKTKEINPNVKGDPTPTGIGCSRGV</sequence>
<evidence type="ECO:0000250" key="1">
    <source>
        <dbReference type="UniProtKB" id="P12944"/>
    </source>
</evidence>
<evidence type="ECO:0000269" key="2">
    <source>
    </source>
</evidence>
<evidence type="ECO:0000269" key="3">
    <source>
    </source>
</evidence>
<evidence type="ECO:0000269" key="4">
    <source>
    </source>
</evidence>
<evidence type="ECO:0000303" key="5">
    <source>
    </source>
</evidence>
<evidence type="ECO:0000303" key="6">
    <source>
    </source>
</evidence>
<evidence type="ECO:0000305" key="7"/>
<evidence type="ECO:0000305" key="8">
    <source>
    </source>
</evidence>
<evidence type="ECO:0000305" key="9">
    <source>
    </source>
</evidence>
<evidence type="ECO:0000312" key="10">
    <source>
        <dbReference type="EMBL" id="AAL81558.1"/>
    </source>
</evidence>
<comment type="function">
    <text evidence="2 3 4">Alpha subunit of a hydrogen-evolving hydrogenase that utilizes protons both as a substrate for hydrogen production and proton translocation. Acts by coupling the redox reaction via ferredoxin and iron-sulfur (Fe-S) clusters to proton translocation across the membrane thereby conserving the redox energy in a proton gradient.</text>
</comment>
<comment type="catalytic activity">
    <reaction evidence="2 3 4">
        <text>H2 + 2 oxidized [2Fe-2S]-[ferredoxin] = 2 reduced [2Fe-2S]-[ferredoxin] + 2 H(+)</text>
        <dbReference type="Rhea" id="RHEA:17445"/>
        <dbReference type="Rhea" id="RHEA-COMP:10000"/>
        <dbReference type="Rhea" id="RHEA-COMP:10001"/>
        <dbReference type="ChEBI" id="CHEBI:15378"/>
        <dbReference type="ChEBI" id="CHEBI:18276"/>
        <dbReference type="ChEBI" id="CHEBI:33737"/>
        <dbReference type="ChEBI" id="CHEBI:33738"/>
        <dbReference type="EC" id="1.12.7.2"/>
    </reaction>
</comment>
<comment type="cofactor">
    <cofactor evidence="2">
        <name>Ni(2+)</name>
        <dbReference type="ChEBI" id="CHEBI:49786"/>
    </cofactor>
    <text evidence="2">Binds 1 nickel ion per mole of protein.</text>
</comment>
<comment type="activity regulation">
    <text evidence="4">Inhibited by 0.1 mM Cu(2+).</text>
</comment>
<comment type="biophysicochemical properties">
    <kinetics>
        <KM evidence="2 3">36 uM for ferredoxin</KM>
        <text evidence="3">Measured for the whole complex.</text>
    </kinetics>
    <phDependence>
        <text evidence="2 3">Optimum pH is 7.0. Active between pH 6.0-8.5.</text>
    </phDependence>
    <temperatureDependence>
        <text evidence="2 3">Optimum temperature is 90 degrees Celsius for membrane-bound enzyme but 80 degrees Celsius for the purified enzyme. Membrane-bound enzyme has a half-life of 2h at 100 degrees Celsius whereas the half-life of the purified enzyme is 30 minutes at 100 degrees Celsius.</text>
    </temperatureDependence>
</comment>
<comment type="subunit">
    <text evidence="2">The membrane-bound hydrogenase complex is composed of MbhK and MbhL, and may also contain MbhJ.</text>
</comment>
<comment type="subcellular location">
    <subcellularLocation>
        <location evidence="2 3">Cell membrane</location>
    </subcellularLocation>
</comment>
<comment type="similarity">
    <text evidence="7">Belongs to the complex I 49 kDa subunit family.</text>
</comment>
<comment type="caution">
    <text evidence="8 9">The subunit composition of membrane-bound hydrogenase complex is currently unclear. It has been shown to be a heterodimer of MbhK and MbhL (PubMed:10852873). Other studies have shown it to contain MbhJ in addition to MbhK and MbhL (PubMed:11054105).</text>
</comment>